<evidence type="ECO:0000255" key="1">
    <source>
        <dbReference type="HAMAP-Rule" id="MF_01326"/>
    </source>
</evidence>
<evidence type="ECO:0000305" key="2"/>
<name>RL24_PSYWF</name>
<dbReference type="EMBL" id="CP000713">
    <property type="protein sequence ID" value="ABQ93392.1"/>
    <property type="molecule type" value="Genomic_DNA"/>
</dbReference>
<dbReference type="SMR" id="A5WCK1"/>
<dbReference type="STRING" id="349106.PsycPRwf_0437"/>
<dbReference type="KEGG" id="prw:PsycPRwf_0437"/>
<dbReference type="eggNOG" id="COG0198">
    <property type="taxonomic scope" value="Bacteria"/>
</dbReference>
<dbReference type="HOGENOM" id="CLU_093315_2_2_6"/>
<dbReference type="GO" id="GO:1990904">
    <property type="term" value="C:ribonucleoprotein complex"/>
    <property type="evidence" value="ECO:0007669"/>
    <property type="project" value="UniProtKB-KW"/>
</dbReference>
<dbReference type="GO" id="GO:0005840">
    <property type="term" value="C:ribosome"/>
    <property type="evidence" value="ECO:0007669"/>
    <property type="project" value="UniProtKB-KW"/>
</dbReference>
<dbReference type="GO" id="GO:0019843">
    <property type="term" value="F:rRNA binding"/>
    <property type="evidence" value="ECO:0007669"/>
    <property type="project" value="UniProtKB-UniRule"/>
</dbReference>
<dbReference type="GO" id="GO:0003735">
    <property type="term" value="F:structural constituent of ribosome"/>
    <property type="evidence" value="ECO:0007669"/>
    <property type="project" value="InterPro"/>
</dbReference>
<dbReference type="GO" id="GO:0006412">
    <property type="term" value="P:translation"/>
    <property type="evidence" value="ECO:0007669"/>
    <property type="project" value="UniProtKB-UniRule"/>
</dbReference>
<dbReference type="CDD" id="cd06089">
    <property type="entry name" value="KOW_RPL26"/>
    <property type="match status" value="1"/>
</dbReference>
<dbReference type="FunFam" id="2.30.30.30:FF:000004">
    <property type="entry name" value="50S ribosomal protein L24"/>
    <property type="match status" value="1"/>
</dbReference>
<dbReference type="Gene3D" id="2.30.30.30">
    <property type="match status" value="1"/>
</dbReference>
<dbReference type="HAMAP" id="MF_01326_B">
    <property type="entry name" value="Ribosomal_uL24_B"/>
    <property type="match status" value="1"/>
</dbReference>
<dbReference type="InterPro" id="IPR005824">
    <property type="entry name" value="KOW"/>
</dbReference>
<dbReference type="InterPro" id="IPR014722">
    <property type="entry name" value="Rib_uL2_dom2"/>
</dbReference>
<dbReference type="InterPro" id="IPR003256">
    <property type="entry name" value="Ribosomal_uL24"/>
</dbReference>
<dbReference type="InterPro" id="IPR005825">
    <property type="entry name" value="Ribosomal_uL24_CS"/>
</dbReference>
<dbReference type="InterPro" id="IPR041988">
    <property type="entry name" value="Ribosomal_uL24_KOW"/>
</dbReference>
<dbReference type="InterPro" id="IPR008991">
    <property type="entry name" value="Translation_prot_SH3-like_sf"/>
</dbReference>
<dbReference type="NCBIfam" id="TIGR01079">
    <property type="entry name" value="rplX_bact"/>
    <property type="match status" value="1"/>
</dbReference>
<dbReference type="PANTHER" id="PTHR12903">
    <property type="entry name" value="MITOCHONDRIAL RIBOSOMAL PROTEIN L24"/>
    <property type="match status" value="1"/>
</dbReference>
<dbReference type="Pfam" id="PF00467">
    <property type="entry name" value="KOW"/>
    <property type="match status" value="1"/>
</dbReference>
<dbReference type="Pfam" id="PF17136">
    <property type="entry name" value="ribosomal_L24"/>
    <property type="match status" value="1"/>
</dbReference>
<dbReference type="SMART" id="SM00739">
    <property type="entry name" value="KOW"/>
    <property type="match status" value="1"/>
</dbReference>
<dbReference type="SUPFAM" id="SSF50104">
    <property type="entry name" value="Translation proteins SH3-like domain"/>
    <property type="match status" value="1"/>
</dbReference>
<dbReference type="PROSITE" id="PS01108">
    <property type="entry name" value="RIBOSOMAL_L24"/>
    <property type="match status" value="1"/>
</dbReference>
<sequence length="105" mass="11406">MAKLRKGDNVIVIAGKDKGKQGTVLAVKNDRIKVEGINIVTKHQKPNAATGAEGGIVKQEAFLHISNVAIFNAQTQKADRITYQFDDEGNKKRVYRSNGEVVATA</sequence>
<accession>A5WCK1</accession>
<reference key="1">
    <citation type="submission" date="2007-05" db="EMBL/GenBank/DDBJ databases">
        <title>Complete sequence of chromosome of Psychrobacter sp. PRwf-1.</title>
        <authorList>
            <consortium name="US DOE Joint Genome Institute"/>
            <person name="Copeland A."/>
            <person name="Lucas S."/>
            <person name="Lapidus A."/>
            <person name="Barry K."/>
            <person name="Detter J.C."/>
            <person name="Glavina del Rio T."/>
            <person name="Hammon N."/>
            <person name="Israni S."/>
            <person name="Dalin E."/>
            <person name="Tice H."/>
            <person name="Pitluck S."/>
            <person name="Chain P."/>
            <person name="Malfatti S."/>
            <person name="Shin M."/>
            <person name="Vergez L."/>
            <person name="Schmutz J."/>
            <person name="Larimer F."/>
            <person name="Land M."/>
            <person name="Hauser L."/>
            <person name="Kyrpides N."/>
            <person name="Kim E."/>
            <person name="Tiedje J."/>
            <person name="Richardson P."/>
        </authorList>
    </citation>
    <scope>NUCLEOTIDE SEQUENCE [LARGE SCALE GENOMIC DNA]</scope>
    <source>
        <strain>PRwf-1</strain>
    </source>
</reference>
<gene>
    <name evidence="1" type="primary">rplX</name>
    <name type="ordered locus">PsycPRwf_0437</name>
</gene>
<keyword id="KW-0687">Ribonucleoprotein</keyword>
<keyword id="KW-0689">Ribosomal protein</keyword>
<keyword id="KW-0694">RNA-binding</keyword>
<keyword id="KW-0699">rRNA-binding</keyword>
<comment type="function">
    <text evidence="1">One of two assembly initiator proteins, it binds directly to the 5'-end of the 23S rRNA, where it nucleates assembly of the 50S subunit.</text>
</comment>
<comment type="function">
    <text evidence="1">One of the proteins that surrounds the polypeptide exit tunnel on the outside of the subunit.</text>
</comment>
<comment type="subunit">
    <text evidence="1">Part of the 50S ribosomal subunit.</text>
</comment>
<comment type="similarity">
    <text evidence="1">Belongs to the universal ribosomal protein uL24 family.</text>
</comment>
<protein>
    <recommendedName>
        <fullName evidence="1">Large ribosomal subunit protein uL24</fullName>
    </recommendedName>
    <alternativeName>
        <fullName evidence="2">50S ribosomal protein L24</fullName>
    </alternativeName>
</protein>
<feature type="chain" id="PRO_1000073262" description="Large ribosomal subunit protein uL24">
    <location>
        <begin position="1"/>
        <end position="105"/>
    </location>
</feature>
<proteinExistence type="inferred from homology"/>
<organism>
    <name type="scientific">Psychrobacter sp. (strain PRwf-1)</name>
    <dbReference type="NCBI Taxonomy" id="349106"/>
    <lineage>
        <taxon>Bacteria</taxon>
        <taxon>Pseudomonadati</taxon>
        <taxon>Pseudomonadota</taxon>
        <taxon>Gammaproteobacteria</taxon>
        <taxon>Moraxellales</taxon>
        <taxon>Moraxellaceae</taxon>
        <taxon>Psychrobacter</taxon>
    </lineage>
</organism>